<name>RL20_RHILO</name>
<dbReference type="EMBL" id="BA000012">
    <property type="protein sequence ID" value="BAB51573.1"/>
    <property type="molecule type" value="Genomic_DNA"/>
</dbReference>
<dbReference type="RefSeq" id="WP_006201247.1">
    <property type="nucleotide sequence ID" value="NC_002678.2"/>
</dbReference>
<dbReference type="SMR" id="Q98CP8"/>
<dbReference type="GeneID" id="90987951"/>
<dbReference type="KEGG" id="mlo:mll5057"/>
<dbReference type="eggNOG" id="COG0292">
    <property type="taxonomic scope" value="Bacteria"/>
</dbReference>
<dbReference type="HOGENOM" id="CLU_123265_0_1_5"/>
<dbReference type="Proteomes" id="UP000000552">
    <property type="component" value="Chromosome"/>
</dbReference>
<dbReference type="GO" id="GO:1990904">
    <property type="term" value="C:ribonucleoprotein complex"/>
    <property type="evidence" value="ECO:0007669"/>
    <property type="project" value="UniProtKB-KW"/>
</dbReference>
<dbReference type="GO" id="GO:0005840">
    <property type="term" value="C:ribosome"/>
    <property type="evidence" value="ECO:0007669"/>
    <property type="project" value="UniProtKB-KW"/>
</dbReference>
<dbReference type="GO" id="GO:0019843">
    <property type="term" value="F:rRNA binding"/>
    <property type="evidence" value="ECO:0007669"/>
    <property type="project" value="UniProtKB-UniRule"/>
</dbReference>
<dbReference type="GO" id="GO:0003735">
    <property type="term" value="F:structural constituent of ribosome"/>
    <property type="evidence" value="ECO:0007669"/>
    <property type="project" value="InterPro"/>
</dbReference>
<dbReference type="GO" id="GO:0000027">
    <property type="term" value="P:ribosomal large subunit assembly"/>
    <property type="evidence" value="ECO:0007669"/>
    <property type="project" value="UniProtKB-UniRule"/>
</dbReference>
<dbReference type="GO" id="GO:0006412">
    <property type="term" value="P:translation"/>
    <property type="evidence" value="ECO:0007669"/>
    <property type="project" value="InterPro"/>
</dbReference>
<dbReference type="CDD" id="cd07026">
    <property type="entry name" value="Ribosomal_L20"/>
    <property type="match status" value="1"/>
</dbReference>
<dbReference type="FunFam" id="1.10.1900.20:FF:000001">
    <property type="entry name" value="50S ribosomal protein L20"/>
    <property type="match status" value="1"/>
</dbReference>
<dbReference type="Gene3D" id="6.10.160.10">
    <property type="match status" value="1"/>
</dbReference>
<dbReference type="Gene3D" id="1.10.1900.20">
    <property type="entry name" value="Ribosomal protein L20"/>
    <property type="match status" value="1"/>
</dbReference>
<dbReference type="HAMAP" id="MF_00382">
    <property type="entry name" value="Ribosomal_bL20"/>
    <property type="match status" value="1"/>
</dbReference>
<dbReference type="InterPro" id="IPR005813">
    <property type="entry name" value="Ribosomal_bL20"/>
</dbReference>
<dbReference type="InterPro" id="IPR049946">
    <property type="entry name" value="RIBOSOMAL_L20_CS"/>
</dbReference>
<dbReference type="InterPro" id="IPR035566">
    <property type="entry name" value="Ribosomal_protein_bL20_C"/>
</dbReference>
<dbReference type="NCBIfam" id="TIGR01032">
    <property type="entry name" value="rplT_bact"/>
    <property type="match status" value="1"/>
</dbReference>
<dbReference type="PANTHER" id="PTHR10986">
    <property type="entry name" value="39S RIBOSOMAL PROTEIN L20"/>
    <property type="match status" value="1"/>
</dbReference>
<dbReference type="Pfam" id="PF00453">
    <property type="entry name" value="Ribosomal_L20"/>
    <property type="match status" value="1"/>
</dbReference>
<dbReference type="PRINTS" id="PR00062">
    <property type="entry name" value="RIBOSOMALL20"/>
</dbReference>
<dbReference type="SUPFAM" id="SSF74731">
    <property type="entry name" value="Ribosomal protein L20"/>
    <property type="match status" value="1"/>
</dbReference>
<dbReference type="PROSITE" id="PS00937">
    <property type="entry name" value="RIBOSOMAL_L20"/>
    <property type="match status" value="1"/>
</dbReference>
<comment type="function">
    <text evidence="1">Binds directly to 23S ribosomal RNA and is necessary for the in vitro assembly process of the 50S ribosomal subunit. It is not involved in the protein synthesizing functions of that subunit.</text>
</comment>
<comment type="similarity">
    <text evidence="1">Belongs to the bacterial ribosomal protein bL20 family.</text>
</comment>
<reference key="1">
    <citation type="journal article" date="2000" name="DNA Res.">
        <title>Complete genome structure of the nitrogen-fixing symbiotic bacterium Mesorhizobium loti.</title>
        <authorList>
            <person name="Kaneko T."/>
            <person name="Nakamura Y."/>
            <person name="Sato S."/>
            <person name="Asamizu E."/>
            <person name="Kato T."/>
            <person name="Sasamoto S."/>
            <person name="Watanabe A."/>
            <person name="Idesawa K."/>
            <person name="Ishikawa A."/>
            <person name="Kawashima K."/>
            <person name="Kimura T."/>
            <person name="Kishida Y."/>
            <person name="Kiyokawa C."/>
            <person name="Kohara M."/>
            <person name="Matsumoto M."/>
            <person name="Matsuno A."/>
            <person name="Mochizuki Y."/>
            <person name="Nakayama S."/>
            <person name="Nakazaki N."/>
            <person name="Shimpo S."/>
            <person name="Sugimoto M."/>
            <person name="Takeuchi C."/>
            <person name="Yamada M."/>
            <person name="Tabata S."/>
        </authorList>
    </citation>
    <scope>NUCLEOTIDE SEQUENCE [LARGE SCALE GENOMIC DNA]</scope>
    <source>
        <strain>LMG 29417 / CECT 9101 / MAFF 303099</strain>
    </source>
</reference>
<gene>
    <name evidence="1" type="primary">rplT</name>
    <name type="ordered locus">mll5057</name>
</gene>
<feature type="chain" id="PRO_0000177212" description="Large ribosomal subunit protein bL20">
    <location>
        <begin position="1"/>
        <end position="133"/>
    </location>
</feature>
<evidence type="ECO:0000255" key="1">
    <source>
        <dbReference type="HAMAP-Rule" id="MF_00382"/>
    </source>
</evidence>
<evidence type="ECO:0000305" key="2"/>
<keyword id="KW-0687">Ribonucleoprotein</keyword>
<keyword id="KW-0689">Ribosomal protein</keyword>
<keyword id="KW-0694">RNA-binding</keyword>
<keyword id="KW-0699">rRNA-binding</keyword>
<proteinExistence type="inferred from homology"/>
<sequence>MARVKRGVTSHAKHKKVLKAAKGFYGRRKNTIRIAKQAVEKSLQYAYRDRKNRKRSFRALWIQRINAATHEHGLTYGRFIDGLNKAGIEIDRKILSDMAIHEPQAFAALVAKAKVALEYLKNTTPNAFESAVA</sequence>
<accession>Q98CP8</accession>
<organism>
    <name type="scientific">Mesorhizobium japonicum (strain LMG 29417 / CECT 9101 / MAFF 303099)</name>
    <name type="common">Mesorhizobium loti (strain MAFF 303099)</name>
    <dbReference type="NCBI Taxonomy" id="266835"/>
    <lineage>
        <taxon>Bacteria</taxon>
        <taxon>Pseudomonadati</taxon>
        <taxon>Pseudomonadota</taxon>
        <taxon>Alphaproteobacteria</taxon>
        <taxon>Hyphomicrobiales</taxon>
        <taxon>Phyllobacteriaceae</taxon>
        <taxon>Mesorhizobium</taxon>
    </lineage>
</organism>
<protein>
    <recommendedName>
        <fullName evidence="1">Large ribosomal subunit protein bL20</fullName>
    </recommendedName>
    <alternativeName>
        <fullName evidence="2">50S ribosomal protein L20</fullName>
    </alternativeName>
</protein>